<dbReference type="EMBL" id="X12777">
    <property type="protein sequence ID" value="CAA31266.1"/>
    <property type="molecule type" value="Genomic_DNA"/>
</dbReference>
<protein>
    <recommendedName>
        <fullName>Putative protein StbC</fullName>
    </recommendedName>
</protein>
<keyword id="KW-0614">Plasmid</keyword>
<reference key="1">
    <citation type="journal article" date="1988" name="J. Mol. Biol.">
        <title>Genetic organization and nucleotide sequence of the stability locus of IncFII plasmid NR1.</title>
        <authorList>
            <person name="Tabuchi A."/>
            <person name="Min Y.-N."/>
            <person name="Kim C.K."/>
            <person name="Fan Y.-L."/>
            <person name="Womble D.D."/>
            <person name="Rownd R.H."/>
        </authorList>
    </citation>
    <scope>NUCLEOTIDE SEQUENCE [GENOMIC DNA]</scope>
    <source>
        <strain>KP245</strain>
    </source>
</reference>
<geneLocation type="plasmid">
    <name>IncFII R100</name>
    <name>NR1</name>
</geneLocation>
<organism>
    <name type="scientific">Escherichia coli</name>
    <dbReference type="NCBI Taxonomy" id="562"/>
    <lineage>
        <taxon>Bacteria</taxon>
        <taxon>Pseudomonadati</taxon>
        <taxon>Pseudomonadota</taxon>
        <taxon>Gammaproteobacteria</taxon>
        <taxon>Enterobacterales</taxon>
        <taxon>Enterobacteriaceae</taxon>
        <taxon>Escherichia</taxon>
    </lineage>
</organism>
<proteinExistence type="predicted"/>
<gene>
    <name type="primary">stbC</name>
</gene>
<sequence length="76" mass="8229">MTIEELKSAISFGNSDLNIFTISENVVSFVSSSHKRKGVRGSCLYKARPAVSAARLRRLRSPCGILSSVSQTILSV</sequence>
<accession>P11905</accession>
<feature type="chain" id="PRO_0000068443" description="Putative protein StbC">
    <location>
        <begin position="1"/>
        <end position="76"/>
    </location>
</feature>
<name>STBC_ECOLX</name>